<reference key="1">
    <citation type="journal article" date="1998" name="Science">
        <title>Genome sequence of the nematode C. elegans: a platform for investigating biology.</title>
        <authorList>
            <consortium name="The C. elegans sequencing consortium"/>
        </authorList>
    </citation>
    <scope>NUCLEOTIDE SEQUENCE [LARGE SCALE GENOMIC DNA]</scope>
    <source>
        <strain>Bristol N2</strain>
    </source>
</reference>
<reference key="2">
    <citation type="journal article" date="1997" name="Electrophoresis">
        <title>Two-dimensional gel electrophoresis of Caenorhabditis elegans homogenates and identification of protein spots by microsequencing.</title>
        <authorList>
            <person name="Bini L."/>
            <person name="Heid H."/>
            <person name="Liberatori S."/>
            <person name="Geier G."/>
            <person name="Pallini V."/>
            <person name="Zwilling R."/>
        </authorList>
    </citation>
    <scope>PROTEIN SEQUENCE OF 56-65</scope>
    <source>
        <strain>Bristol N2</strain>
    </source>
</reference>
<reference key="3">
    <citation type="journal article" date="2002" name="Nature">
        <title>Specific aspartyl and calpain proteases are required for neurodegeneration in C. elegans.</title>
        <authorList>
            <person name="Syntichaki P."/>
            <person name="Xu K."/>
            <person name="Driscoll M."/>
            <person name="Tavernarakis N."/>
        </authorList>
    </citation>
    <scope>FUNCTION</scope>
    <scope>SUBCELLULAR LOCATION</scope>
    <scope>TISSUE SPECIFICITY</scope>
    <scope>DEVELOPMENTAL STAGE</scope>
    <scope>DISRUPTION PHENOTYPE</scope>
</reference>
<reference key="4">
    <citation type="journal article" date="2007" name="Mol. Cell. Proteomics">
        <title>Proteomics reveals N-linked glycoprotein diversity in Caenorhabditis elegans and suggests an atypical translocation mechanism for integral membrane proteins.</title>
        <authorList>
            <person name="Kaji H."/>
            <person name="Kamiie J."/>
            <person name="Kawakami H."/>
            <person name="Kido K."/>
            <person name="Yamauchi Y."/>
            <person name="Shinkawa T."/>
            <person name="Taoka M."/>
            <person name="Takahashi N."/>
            <person name="Isobe T."/>
        </authorList>
    </citation>
    <scope>GLYCOSYLATION [LARGE SCALE ANALYSIS] AT ASN-321</scope>
    <scope>IDENTIFICATION BY MASS SPECTROMETRY</scope>
    <source>
        <strain>Bristol N2</strain>
    </source>
</reference>
<reference key="5">
    <citation type="journal article" date="2016" name="PLoS Pathog.">
        <title>Bacillus thuringiensis Crystal Protein Cry6Aa Triggers Caenorhabditis elegans Necrosis Pathway Mediated by Aspartic Protease (ASP-1).</title>
        <authorList>
            <person name="Zhang F."/>
            <person name="Peng D."/>
            <person name="Cheng C."/>
            <person name="Zhou W."/>
            <person name="Ju S."/>
            <person name="Wan D."/>
            <person name="Yu Z."/>
            <person name="Shi J."/>
            <person name="Deng Y."/>
            <person name="Wang F."/>
            <person name="Ye X."/>
            <person name="Hu Z."/>
            <person name="Lin J."/>
            <person name="Ruan L."/>
            <person name="Sun M."/>
        </authorList>
    </citation>
    <scope>FUNCTION</scope>
</reference>
<comment type="function">
    <text evidence="6 8 10">Aspartic protease (Probable). Part of the necrosis cell death pathway (PubMed:12410314). Involved in neuronal cell degeneration (PubMed:12410314). Involved in heat stress response (PubMed:26795495).</text>
</comment>
<comment type="subcellular location">
    <subcellularLocation>
        <location evidence="6">Cytoplasm</location>
    </subcellularLocation>
    <subcellularLocation>
        <location evidence="6">Lysosome</location>
    </subcellularLocation>
    <subcellularLocation>
        <location evidence="10">Secreted</location>
    </subcellularLocation>
</comment>
<comment type="tissue specificity">
    <text evidence="6">Highly expressed in intestine and to a lower extent in body wall muscles, hypodermis and neurons.</text>
</comment>
<comment type="developmental stage">
    <text evidence="6">Expressed at the 2-fold stage embryo.</text>
</comment>
<comment type="disruption phenotype">
    <text evidence="6">RNAi-mediated knockdown prevents neuronal degeneration in a mec-4(u231), deg-1(u38) or gsa-1(Q227L) gain-of-function mutant background.</text>
</comment>
<comment type="similarity">
    <text evidence="10">Belongs to the peptidase A1 family.</text>
</comment>
<evidence type="ECO:0000250" key="1">
    <source>
        <dbReference type="UniProtKB" id="P0DJD7"/>
    </source>
</evidence>
<evidence type="ECO:0000250" key="2">
    <source>
        <dbReference type="UniProtKB" id="Q9N9H4"/>
    </source>
</evidence>
<evidence type="ECO:0000255" key="3"/>
<evidence type="ECO:0000255" key="4">
    <source>
        <dbReference type="PROSITE-ProRule" id="PRU01103"/>
    </source>
</evidence>
<evidence type="ECO:0000255" key="5">
    <source>
        <dbReference type="PROSITE-ProRule" id="PRU10094"/>
    </source>
</evidence>
<evidence type="ECO:0000269" key="6">
    <source>
    </source>
</evidence>
<evidence type="ECO:0000269" key="7">
    <source>
    </source>
</evidence>
<evidence type="ECO:0000269" key="8">
    <source>
    </source>
</evidence>
<evidence type="ECO:0000269" key="9">
    <source>
    </source>
</evidence>
<evidence type="ECO:0000305" key="10"/>
<evidence type="ECO:0000312" key="11">
    <source>
        <dbReference type="WormBase" id="H22K11.1"/>
    </source>
</evidence>
<accession>P55956</accession>
<accession>Q9TXI5</accession>
<name>ASP3_CAEEL</name>
<feature type="signal peptide" evidence="3">
    <location>
        <begin position="1"/>
        <end position="17"/>
    </location>
</feature>
<feature type="propeptide" id="PRO_0000025937" description="Removed in mature form" evidence="9">
    <location>
        <begin position="18"/>
        <end position="55"/>
    </location>
</feature>
<feature type="chain" id="PRO_0000025938" description="Aspartic protease 3">
    <location>
        <begin position="56"/>
        <end position="398"/>
    </location>
</feature>
<feature type="domain" description="Peptidase A1" evidence="4">
    <location>
        <begin position="69"/>
        <end position="392"/>
    </location>
</feature>
<feature type="active site" evidence="5">
    <location>
        <position position="87"/>
    </location>
</feature>
<feature type="active site" evidence="5">
    <location>
        <position position="279"/>
    </location>
</feature>
<feature type="glycosylation site" description="N-linked (GlcNAc...) asparagine" evidence="7">
    <location>
        <position position="321"/>
    </location>
</feature>
<feature type="disulfide bond" evidence="1">
    <location>
        <begin position="100"/>
        <end position="107"/>
    </location>
</feature>
<feature type="disulfide bond" evidence="4">
    <location>
        <begin position="313"/>
        <end position="351"/>
    </location>
</feature>
<proteinExistence type="evidence at protein level"/>
<keyword id="KW-0064">Aspartyl protease</keyword>
<keyword id="KW-0963">Cytoplasm</keyword>
<keyword id="KW-0903">Direct protein sequencing</keyword>
<keyword id="KW-1015">Disulfide bond</keyword>
<keyword id="KW-0325">Glycoprotein</keyword>
<keyword id="KW-0378">Hydrolase</keyword>
<keyword id="KW-0458">Lysosome</keyword>
<keyword id="KW-1210">Necrosis</keyword>
<keyword id="KW-0645">Protease</keyword>
<keyword id="KW-1185">Reference proteome</keyword>
<keyword id="KW-0964">Secreted</keyword>
<keyword id="KW-0732">Signal</keyword>
<keyword id="KW-0865">Zymogen</keyword>
<organism>
    <name type="scientific">Caenorhabditis elegans</name>
    <dbReference type="NCBI Taxonomy" id="6239"/>
    <lineage>
        <taxon>Eukaryota</taxon>
        <taxon>Metazoa</taxon>
        <taxon>Ecdysozoa</taxon>
        <taxon>Nematoda</taxon>
        <taxon>Chromadorea</taxon>
        <taxon>Rhabditida</taxon>
        <taxon>Rhabditina</taxon>
        <taxon>Rhabditomorpha</taxon>
        <taxon>Rhabditoidea</taxon>
        <taxon>Rhabditidae</taxon>
        <taxon>Peloderinae</taxon>
        <taxon>Caenorhabditis</taxon>
    </lineage>
</organism>
<sequence>MSGRVFLLLALVALASAIQRIKLEKRTYTREQYKFGSIQEHLKAKYVPGYIPNKDAFNEGLSDYSNAQYYGPVTIGTPPQNFQVLFDTGSSNLWVPCANCPFGDIACRMHNRFDCKKSSSCTATGASFEIQYGTGSMKGTVDNDVVCFGHDTTYCTDKNQGLACATSEPGITFVAAKFDGIFGMGWDTISVNKISQPMDQIFANSAICKNQLFAFWLSRDANDITNGGEITLCDTDPNHYVGNIAWEPLVSEDYWRIKLASVVIDGTTYTSGPIDSIVDTGTSLLTGPTDVIKKIQHKIGGIPLFNGEYEVECSKIPSLPNITFNLGGQNFDLQGKDYILQMSNGNGGSTCLSGFMGMDIPAPAGPLWILGDVFIGRFYSVFDHGNKRVGFATSRTGK</sequence>
<protein>
    <recommendedName>
        <fullName evidence="11">Aspartic protease 3</fullName>
        <ecNumber evidence="2">3.4.23.-</ecNumber>
    </recommendedName>
</protein>
<gene>
    <name evidence="11" type="primary">asp-3</name>
    <name evidence="11" type="ORF">H22K11.1</name>
</gene>
<dbReference type="EC" id="3.4.23.-" evidence="2"/>
<dbReference type="EMBL" id="FO081559">
    <property type="protein sequence ID" value="CCD72415.2"/>
    <property type="molecule type" value="Genomic_DNA"/>
</dbReference>
<dbReference type="PIR" id="T33383">
    <property type="entry name" value="T33383"/>
</dbReference>
<dbReference type="RefSeq" id="NP_509142.2">
    <property type="nucleotide sequence ID" value="NM_076741.8"/>
</dbReference>
<dbReference type="SMR" id="P55956"/>
<dbReference type="BioGRID" id="45876">
    <property type="interactions" value="44"/>
</dbReference>
<dbReference type="DIP" id="DIP-26574N"/>
<dbReference type="FunCoup" id="P55956">
    <property type="interactions" value="180"/>
</dbReference>
<dbReference type="IntAct" id="P55956">
    <property type="interactions" value="3"/>
</dbReference>
<dbReference type="STRING" id="6239.H22K11.1.1"/>
<dbReference type="MEROPS" id="A01.A69"/>
<dbReference type="GlyCosmos" id="P55956">
    <property type="glycosylation" value="1 site, No reported glycans"/>
</dbReference>
<dbReference type="iPTMnet" id="P55956"/>
<dbReference type="PaxDb" id="6239-H22K11.1"/>
<dbReference type="PeptideAtlas" id="P55956"/>
<dbReference type="EnsemblMetazoa" id="H22K11.1.1">
    <property type="protein sequence ID" value="H22K11.1.1"/>
    <property type="gene ID" value="WBGene00000216"/>
</dbReference>
<dbReference type="GeneID" id="180947"/>
<dbReference type="KEGG" id="cel:CELE_H22K11.1"/>
<dbReference type="UCSC" id="H22K11.1">
    <property type="organism name" value="c. elegans"/>
</dbReference>
<dbReference type="AGR" id="WB:WBGene00000216"/>
<dbReference type="CTD" id="180947"/>
<dbReference type="WormBase" id="H22K11.1">
    <property type="protein sequence ID" value="CE47856"/>
    <property type="gene ID" value="WBGene00000216"/>
    <property type="gene designation" value="asp-3"/>
</dbReference>
<dbReference type="eggNOG" id="KOG1339">
    <property type="taxonomic scope" value="Eukaryota"/>
</dbReference>
<dbReference type="HOGENOM" id="CLU_013253_3_1_1"/>
<dbReference type="InParanoid" id="P55956"/>
<dbReference type="OMA" id="IACRMHN"/>
<dbReference type="OrthoDB" id="771136at2759"/>
<dbReference type="PhylomeDB" id="P55956"/>
<dbReference type="Reactome" id="R-CEL-2022377">
    <property type="pathway name" value="Metabolism of Angiotensinogen to Angiotensins"/>
</dbReference>
<dbReference type="PRO" id="PR:P55956"/>
<dbReference type="Proteomes" id="UP000001940">
    <property type="component" value="Chromosome X"/>
</dbReference>
<dbReference type="Bgee" id="WBGene00000216">
    <property type="expression patterns" value="Expressed in larva and 4 other cell types or tissues"/>
</dbReference>
<dbReference type="GO" id="GO:0005737">
    <property type="term" value="C:cytoplasm"/>
    <property type="evidence" value="ECO:0000314"/>
    <property type="project" value="WormBase"/>
</dbReference>
<dbReference type="GO" id="GO:0005576">
    <property type="term" value="C:extracellular region"/>
    <property type="evidence" value="ECO:0007669"/>
    <property type="project" value="UniProtKB-SubCell"/>
</dbReference>
<dbReference type="GO" id="GO:0005764">
    <property type="term" value="C:lysosome"/>
    <property type="evidence" value="ECO:0000314"/>
    <property type="project" value="WormBase"/>
</dbReference>
<dbReference type="GO" id="GO:0004190">
    <property type="term" value="F:aspartic-type endopeptidase activity"/>
    <property type="evidence" value="ECO:0000318"/>
    <property type="project" value="GO_Central"/>
</dbReference>
<dbReference type="GO" id="GO:0006915">
    <property type="term" value="P:apoptotic process"/>
    <property type="evidence" value="ECO:0000318"/>
    <property type="project" value="GO_Central"/>
</dbReference>
<dbReference type="GO" id="GO:0097300">
    <property type="term" value="P:programmed necrotic cell death"/>
    <property type="evidence" value="ECO:0000316"/>
    <property type="project" value="WormBase"/>
</dbReference>
<dbReference type="GO" id="GO:0006508">
    <property type="term" value="P:proteolysis"/>
    <property type="evidence" value="ECO:0000318"/>
    <property type="project" value="GO_Central"/>
</dbReference>
<dbReference type="FunFam" id="2.40.70.10:FF:000138">
    <property type="entry name" value="Aspartic protease 3"/>
    <property type="match status" value="1"/>
</dbReference>
<dbReference type="FunFam" id="2.40.70.10:FF:000002">
    <property type="entry name" value="Vacuolar aspartic proteinase"/>
    <property type="match status" value="1"/>
</dbReference>
<dbReference type="Gene3D" id="2.40.70.10">
    <property type="entry name" value="Acid Proteases"/>
    <property type="match status" value="2"/>
</dbReference>
<dbReference type="InterPro" id="IPR001461">
    <property type="entry name" value="Aspartic_peptidase_A1"/>
</dbReference>
<dbReference type="InterPro" id="IPR001969">
    <property type="entry name" value="Aspartic_peptidase_AS"/>
</dbReference>
<dbReference type="InterPro" id="IPR033121">
    <property type="entry name" value="PEPTIDASE_A1"/>
</dbReference>
<dbReference type="InterPro" id="IPR021109">
    <property type="entry name" value="Peptidase_aspartic_dom_sf"/>
</dbReference>
<dbReference type="PANTHER" id="PTHR47966:SF40">
    <property type="entry name" value="ASPARTIC PROTEASE 3"/>
    <property type="match status" value="1"/>
</dbReference>
<dbReference type="PANTHER" id="PTHR47966">
    <property type="entry name" value="BETA-SITE APP-CLEAVING ENZYME, ISOFORM A-RELATED"/>
    <property type="match status" value="1"/>
</dbReference>
<dbReference type="Pfam" id="PF00026">
    <property type="entry name" value="Asp"/>
    <property type="match status" value="1"/>
</dbReference>
<dbReference type="PRINTS" id="PR00792">
    <property type="entry name" value="PEPSIN"/>
</dbReference>
<dbReference type="SUPFAM" id="SSF50630">
    <property type="entry name" value="Acid proteases"/>
    <property type="match status" value="1"/>
</dbReference>
<dbReference type="PROSITE" id="PS00141">
    <property type="entry name" value="ASP_PROTEASE"/>
    <property type="match status" value="1"/>
</dbReference>
<dbReference type="PROSITE" id="PS51767">
    <property type="entry name" value="PEPTIDASE_A1"/>
    <property type="match status" value="1"/>
</dbReference>